<evidence type="ECO:0000255" key="1">
    <source>
        <dbReference type="HAMAP-Rule" id="MF_00076"/>
    </source>
</evidence>
<feature type="chain" id="PRO_1000057519" description="Imidazoleglycerol-phosphate dehydratase">
    <location>
        <begin position="1"/>
        <end position="194"/>
    </location>
</feature>
<proteinExistence type="inferred from homology"/>
<reference key="1">
    <citation type="journal article" date="2006" name="Proc. Natl. Acad. Sci. U.S.A.">
        <title>Comparative genomics of the lactic acid bacteria.</title>
        <authorList>
            <person name="Makarova K.S."/>
            <person name="Slesarev A."/>
            <person name="Wolf Y.I."/>
            <person name="Sorokin A."/>
            <person name="Mirkin B."/>
            <person name="Koonin E.V."/>
            <person name="Pavlov A."/>
            <person name="Pavlova N."/>
            <person name="Karamychev V."/>
            <person name="Polouchine N."/>
            <person name="Shakhova V."/>
            <person name="Grigoriev I."/>
            <person name="Lou Y."/>
            <person name="Rohksar D."/>
            <person name="Lucas S."/>
            <person name="Huang K."/>
            <person name="Goodstein D.M."/>
            <person name="Hawkins T."/>
            <person name="Plengvidhya V."/>
            <person name="Welker D."/>
            <person name="Hughes J."/>
            <person name="Goh Y."/>
            <person name="Benson A."/>
            <person name="Baldwin K."/>
            <person name="Lee J.-H."/>
            <person name="Diaz-Muniz I."/>
            <person name="Dosti B."/>
            <person name="Smeianov V."/>
            <person name="Wechter W."/>
            <person name="Barabote R."/>
            <person name="Lorca G."/>
            <person name="Altermann E."/>
            <person name="Barrangou R."/>
            <person name="Ganesan B."/>
            <person name="Xie Y."/>
            <person name="Rawsthorne H."/>
            <person name="Tamir D."/>
            <person name="Parker C."/>
            <person name="Breidt F."/>
            <person name="Broadbent J.R."/>
            <person name="Hutkins R."/>
            <person name="O'Sullivan D."/>
            <person name="Steele J."/>
            <person name="Unlu G."/>
            <person name="Saier M.H. Jr."/>
            <person name="Klaenhammer T."/>
            <person name="Richardson P."/>
            <person name="Kozyavkin S."/>
            <person name="Weimer B.C."/>
            <person name="Mills D.A."/>
        </authorList>
    </citation>
    <scope>NUCLEOTIDE SEQUENCE [LARGE SCALE GENOMIC DNA]</scope>
    <source>
        <strain>ATCC 334 / BCRC 17002 / CCUG 31169 / CIP 107868 / KCTC 3260 / NRRL B-441</strain>
    </source>
</reference>
<name>HIS7_LACP3</name>
<comment type="catalytic activity">
    <reaction evidence="1">
        <text>D-erythro-1-(imidazol-4-yl)glycerol 3-phosphate = 3-(imidazol-4-yl)-2-oxopropyl phosphate + H2O</text>
        <dbReference type="Rhea" id="RHEA:11040"/>
        <dbReference type="ChEBI" id="CHEBI:15377"/>
        <dbReference type="ChEBI" id="CHEBI:57766"/>
        <dbReference type="ChEBI" id="CHEBI:58278"/>
        <dbReference type="EC" id="4.2.1.19"/>
    </reaction>
</comment>
<comment type="pathway">
    <text evidence="1">Amino-acid biosynthesis; L-histidine biosynthesis; L-histidine from 5-phospho-alpha-D-ribose 1-diphosphate: step 6/9.</text>
</comment>
<comment type="subcellular location">
    <subcellularLocation>
        <location evidence="1">Cytoplasm</location>
    </subcellularLocation>
</comment>
<comment type="similarity">
    <text evidence="1">Belongs to the imidazoleglycerol-phosphate dehydratase family.</text>
</comment>
<dbReference type="EC" id="4.2.1.19" evidence="1"/>
<dbReference type="EMBL" id="CP000423">
    <property type="protein sequence ID" value="ABJ70210.1"/>
    <property type="molecule type" value="Genomic_DNA"/>
</dbReference>
<dbReference type="RefSeq" id="WP_011674505.1">
    <property type="nucleotide sequence ID" value="NC_008526.1"/>
</dbReference>
<dbReference type="RefSeq" id="YP_806652.1">
    <property type="nucleotide sequence ID" value="NC_008526.1"/>
</dbReference>
<dbReference type="SMR" id="Q039B2"/>
<dbReference type="STRING" id="321967.LSEI_1432"/>
<dbReference type="PaxDb" id="321967-LSEI_1432"/>
<dbReference type="KEGG" id="lca:LSEI_1432"/>
<dbReference type="PATRIC" id="fig|321967.11.peg.1412"/>
<dbReference type="HOGENOM" id="CLU_044308_3_0_9"/>
<dbReference type="UniPathway" id="UPA00031">
    <property type="reaction ID" value="UER00011"/>
</dbReference>
<dbReference type="Proteomes" id="UP000001651">
    <property type="component" value="Chromosome"/>
</dbReference>
<dbReference type="GO" id="GO:0005737">
    <property type="term" value="C:cytoplasm"/>
    <property type="evidence" value="ECO:0007669"/>
    <property type="project" value="UniProtKB-SubCell"/>
</dbReference>
<dbReference type="GO" id="GO:0004424">
    <property type="term" value="F:imidazoleglycerol-phosphate dehydratase activity"/>
    <property type="evidence" value="ECO:0007669"/>
    <property type="project" value="UniProtKB-UniRule"/>
</dbReference>
<dbReference type="GO" id="GO:0000105">
    <property type="term" value="P:L-histidine biosynthetic process"/>
    <property type="evidence" value="ECO:0007669"/>
    <property type="project" value="UniProtKB-UniRule"/>
</dbReference>
<dbReference type="CDD" id="cd07914">
    <property type="entry name" value="IGPD"/>
    <property type="match status" value="1"/>
</dbReference>
<dbReference type="FunFam" id="3.30.230.40:FF:000001">
    <property type="entry name" value="Imidazoleglycerol-phosphate dehydratase HisB"/>
    <property type="match status" value="1"/>
</dbReference>
<dbReference type="FunFam" id="3.30.230.40:FF:000003">
    <property type="entry name" value="Imidazoleglycerol-phosphate dehydratase HisB"/>
    <property type="match status" value="1"/>
</dbReference>
<dbReference type="Gene3D" id="3.30.230.40">
    <property type="entry name" value="Imidazole glycerol phosphate dehydratase, domain 1"/>
    <property type="match status" value="2"/>
</dbReference>
<dbReference type="HAMAP" id="MF_00076">
    <property type="entry name" value="HisB"/>
    <property type="match status" value="1"/>
</dbReference>
<dbReference type="InterPro" id="IPR038494">
    <property type="entry name" value="IGPD_sf"/>
</dbReference>
<dbReference type="InterPro" id="IPR000807">
    <property type="entry name" value="ImidazoleglycerolP_deHydtase"/>
</dbReference>
<dbReference type="InterPro" id="IPR020565">
    <property type="entry name" value="ImidazoleglycerP_deHydtase_CS"/>
</dbReference>
<dbReference type="InterPro" id="IPR020568">
    <property type="entry name" value="Ribosomal_Su5_D2-typ_SF"/>
</dbReference>
<dbReference type="NCBIfam" id="NF002107">
    <property type="entry name" value="PRK00951.1-2"/>
    <property type="match status" value="1"/>
</dbReference>
<dbReference type="NCBIfam" id="NF002111">
    <property type="entry name" value="PRK00951.2-1"/>
    <property type="match status" value="1"/>
</dbReference>
<dbReference type="NCBIfam" id="NF002114">
    <property type="entry name" value="PRK00951.2-4"/>
    <property type="match status" value="1"/>
</dbReference>
<dbReference type="PANTHER" id="PTHR23133:SF2">
    <property type="entry name" value="IMIDAZOLEGLYCEROL-PHOSPHATE DEHYDRATASE"/>
    <property type="match status" value="1"/>
</dbReference>
<dbReference type="PANTHER" id="PTHR23133">
    <property type="entry name" value="IMIDAZOLEGLYCEROL-PHOSPHATE DEHYDRATASE HIS7"/>
    <property type="match status" value="1"/>
</dbReference>
<dbReference type="Pfam" id="PF00475">
    <property type="entry name" value="IGPD"/>
    <property type="match status" value="1"/>
</dbReference>
<dbReference type="SUPFAM" id="SSF54211">
    <property type="entry name" value="Ribosomal protein S5 domain 2-like"/>
    <property type="match status" value="2"/>
</dbReference>
<dbReference type="PROSITE" id="PS00954">
    <property type="entry name" value="IGP_DEHYDRATASE_1"/>
    <property type="match status" value="1"/>
</dbReference>
<dbReference type="PROSITE" id="PS00955">
    <property type="entry name" value="IGP_DEHYDRATASE_2"/>
    <property type="match status" value="1"/>
</dbReference>
<protein>
    <recommendedName>
        <fullName evidence="1">Imidazoleglycerol-phosphate dehydratase</fullName>
        <shortName evidence="1">IGPD</shortName>
        <ecNumber evidence="1">4.2.1.19</ecNumber>
    </recommendedName>
</protein>
<gene>
    <name evidence="1" type="primary">hisB</name>
    <name type="ordered locus">LSEI_1432</name>
</gene>
<keyword id="KW-0028">Amino-acid biosynthesis</keyword>
<keyword id="KW-0963">Cytoplasm</keyword>
<keyword id="KW-0368">Histidine biosynthesis</keyword>
<keyword id="KW-0456">Lyase</keyword>
<keyword id="KW-1185">Reference proteome</keyword>
<accession>Q039B2</accession>
<sequence length="194" mass="21111">MRTATITRTTKETTITISLNLDQQSGIQIATGIGFFDHMLDAFAKHGRFGLTVDAQGDLDVDPHHTIEDTGIVLGECFKQALGDKAGIERFRSAFVPMDESLARAVVDLSGRAYLVFDAELTNQRLGGFDTEVTEDFFQAVAFAGEFNLHASVLYGRNTHHKIEALFKALGRSLRAAVAINPEVQGIPSTKGVI</sequence>
<organism>
    <name type="scientific">Lacticaseibacillus paracasei (strain ATCC 334 / BCRC 17002 / CCUG 31169 / CIP 107868 / KCTC 3260 / NRRL B-441)</name>
    <name type="common">Lactobacillus paracasei</name>
    <dbReference type="NCBI Taxonomy" id="321967"/>
    <lineage>
        <taxon>Bacteria</taxon>
        <taxon>Bacillati</taxon>
        <taxon>Bacillota</taxon>
        <taxon>Bacilli</taxon>
        <taxon>Lactobacillales</taxon>
        <taxon>Lactobacillaceae</taxon>
        <taxon>Lacticaseibacillus</taxon>
    </lineage>
</organism>